<feature type="chain" id="PRO_0000098978" description="Tryptophan synthase beta chain">
    <location>
        <begin position="1"/>
        <end position="416"/>
    </location>
</feature>
<feature type="modified residue" description="N6-(pyridoxal phosphate)lysine" evidence="1">
    <location>
        <position position="109"/>
    </location>
</feature>
<dbReference type="EC" id="4.2.1.20" evidence="1"/>
<dbReference type="EMBL" id="AE017126">
    <property type="protein sequence ID" value="AAP99234.1"/>
    <property type="molecule type" value="Genomic_DNA"/>
</dbReference>
<dbReference type="RefSeq" id="NP_874582.1">
    <property type="nucleotide sequence ID" value="NC_005042.1"/>
</dbReference>
<dbReference type="RefSeq" id="WP_011124343.1">
    <property type="nucleotide sequence ID" value="NC_005042.1"/>
</dbReference>
<dbReference type="SMR" id="Q7VE26"/>
<dbReference type="STRING" id="167539.Pro_0188"/>
<dbReference type="EnsemblBacteria" id="AAP99234">
    <property type="protein sequence ID" value="AAP99234"/>
    <property type="gene ID" value="Pro_0188"/>
</dbReference>
<dbReference type="KEGG" id="pma:Pro_0188"/>
<dbReference type="PATRIC" id="fig|167539.5.peg.195"/>
<dbReference type="eggNOG" id="COG0133">
    <property type="taxonomic scope" value="Bacteria"/>
</dbReference>
<dbReference type="HOGENOM" id="CLU_016734_3_1_3"/>
<dbReference type="OrthoDB" id="9766131at2"/>
<dbReference type="UniPathway" id="UPA00035">
    <property type="reaction ID" value="UER00044"/>
</dbReference>
<dbReference type="Proteomes" id="UP000001420">
    <property type="component" value="Chromosome"/>
</dbReference>
<dbReference type="GO" id="GO:0005737">
    <property type="term" value="C:cytoplasm"/>
    <property type="evidence" value="ECO:0007669"/>
    <property type="project" value="TreeGrafter"/>
</dbReference>
<dbReference type="GO" id="GO:0004834">
    <property type="term" value="F:tryptophan synthase activity"/>
    <property type="evidence" value="ECO:0007669"/>
    <property type="project" value="UniProtKB-UniRule"/>
</dbReference>
<dbReference type="CDD" id="cd06446">
    <property type="entry name" value="Trp-synth_B"/>
    <property type="match status" value="1"/>
</dbReference>
<dbReference type="FunFam" id="3.40.50.1100:FF:000001">
    <property type="entry name" value="Tryptophan synthase beta chain"/>
    <property type="match status" value="1"/>
</dbReference>
<dbReference type="FunFam" id="3.40.50.1100:FF:000004">
    <property type="entry name" value="Tryptophan synthase beta chain"/>
    <property type="match status" value="1"/>
</dbReference>
<dbReference type="Gene3D" id="3.40.50.1100">
    <property type="match status" value="2"/>
</dbReference>
<dbReference type="HAMAP" id="MF_00133">
    <property type="entry name" value="Trp_synth_beta"/>
    <property type="match status" value="1"/>
</dbReference>
<dbReference type="InterPro" id="IPR006653">
    <property type="entry name" value="Trp_synth_b_CS"/>
</dbReference>
<dbReference type="InterPro" id="IPR006654">
    <property type="entry name" value="Trp_synth_beta"/>
</dbReference>
<dbReference type="InterPro" id="IPR023026">
    <property type="entry name" value="Trp_synth_beta/beta-like"/>
</dbReference>
<dbReference type="InterPro" id="IPR001926">
    <property type="entry name" value="TrpB-like_PALP"/>
</dbReference>
<dbReference type="InterPro" id="IPR036052">
    <property type="entry name" value="TrpB-like_PALP_sf"/>
</dbReference>
<dbReference type="NCBIfam" id="TIGR00263">
    <property type="entry name" value="trpB"/>
    <property type="match status" value="1"/>
</dbReference>
<dbReference type="PANTHER" id="PTHR48077:SF3">
    <property type="entry name" value="TRYPTOPHAN SYNTHASE"/>
    <property type="match status" value="1"/>
</dbReference>
<dbReference type="PANTHER" id="PTHR48077">
    <property type="entry name" value="TRYPTOPHAN SYNTHASE-RELATED"/>
    <property type="match status" value="1"/>
</dbReference>
<dbReference type="Pfam" id="PF00291">
    <property type="entry name" value="PALP"/>
    <property type="match status" value="1"/>
</dbReference>
<dbReference type="PIRSF" id="PIRSF001413">
    <property type="entry name" value="Trp_syn_beta"/>
    <property type="match status" value="1"/>
</dbReference>
<dbReference type="SUPFAM" id="SSF53686">
    <property type="entry name" value="Tryptophan synthase beta subunit-like PLP-dependent enzymes"/>
    <property type="match status" value="1"/>
</dbReference>
<dbReference type="PROSITE" id="PS00168">
    <property type="entry name" value="TRP_SYNTHASE_BETA"/>
    <property type="match status" value="1"/>
</dbReference>
<keyword id="KW-0028">Amino-acid biosynthesis</keyword>
<keyword id="KW-0057">Aromatic amino acid biosynthesis</keyword>
<keyword id="KW-0456">Lyase</keyword>
<keyword id="KW-0663">Pyridoxal phosphate</keyword>
<keyword id="KW-1185">Reference proteome</keyword>
<keyword id="KW-0822">Tryptophan biosynthesis</keyword>
<accession>Q7VE26</accession>
<comment type="function">
    <text evidence="1">The beta subunit is responsible for the synthesis of L-tryptophan from indole and L-serine.</text>
</comment>
<comment type="catalytic activity">
    <reaction evidence="1">
        <text>(1S,2R)-1-C-(indol-3-yl)glycerol 3-phosphate + L-serine = D-glyceraldehyde 3-phosphate + L-tryptophan + H2O</text>
        <dbReference type="Rhea" id="RHEA:10532"/>
        <dbReference type="ChEBI" id="CHEBI:15377"/>
        <dbReference type="ChEBI" id="CHEBI:33384"/>
        <dbReference type="ChEBI" id="CHEBI:57912"/>
        <dbReference type="ChEBI" id="CHEBI:58866"/>
        <dbReference type="ChEBI" id="CHEBI:59776"/>
        <dbReference type="EC" id="4.2.1.20"/>
    </reaction>
</comment>
<comment type="cofactor">
    <cofactor evidence="1">
        <name>pyridoxal 5'-phosphate</name>
        <dbReference type="ChEBI" id="CHEBI:597326"/>
    </cofactor>
</comment>
<comment type="pathway">
    <text evidence="1">Amino-acid biosynthesis; L-tryptophan biosynthesis; L-tryptophan from chorismate: step 5/5.</text>
</comment>
<comment type="subunit">
    <text evidence="1">Tetramer of two alpha and two beta chains.</text>
</comment>
<comment type="similarity">
    <text evidence="1">Belongs to the TrpB family.</text>
</comment>
<name>TRPB_PROMA</name>
<proteinExistence type="inferred from homology"/>
<gene>
    <name evidence="1" type="primary">trpB</name>
    <name type="ordered locus">Pro_0188</name>
</gene>
<reference key="1">
    <citation type="journal article" date="2003" name="Proc. Natl. Acad. Sci. U.S.A.">
        <title>Genome sequence of the cyanobacterium Prochlorococcus marinus SS120, a nearly minimal oxyphototrophic genome.</title>
        <authorList>
            <person name="Dufresne A."/>
            <person name="Salanoubat M."/>
            <person name="Partensky F."/>
            <person name="Artiguenave F."/>
            <person name="Axmann I.M."/>
            <person name="Barbe V."/>
            <person name="Duprat S."/>
            <person name="Galperin M.Y."/>
            <person name="Koonin E.V."/>
            <person name="Le Gall F."/>
            <person name="Makarova K.S."/>
            <person name="Ostrowski M."/>
            <person name="Oztas S."/>
            <person name="Robert C."/>
            <person name="Rogozin I.B."/>
            <person name="Scanlan D.J."/>
            <person name="Tandeau de Marsac N."/>
            <person name="Weissenbach J."/>
            <person name="Wincker P."/>
            <person name="Wolf Y.I."/>
            <person name="Hess W.R."/>
        </authorList>
    </citation>
    <scope>NUCLEOTIDE SEQUENCE [LARGE SCALE GENOMIC DNA]</scope>
    <source>
        <strain>SARG / CCMP1375 / SS120</strain>
    </source>
</reference>
<sequence>MTGTIPSNSQDPDLVLSARPSAHGRFGRFGGQYVPETLIPALTELEQAAATAWKDESFTKELTQLLKTYVGRETPLYEATRLTKHYERGTVGPRIWLKREDLNHTGAHKINNALGQALLAIRMGKKRIIAETGAGQHGVATATVCARFGLECIIYMGQEDMRRQSLNVFRMKLLGAKVRPVTAGTATLKDATSEAIRDWVTNVETTHYILGSVAGPHPYPMLVRDFHAVIGEEAKKQCLEAFGRSPDVLLACVGGGSNAMGLFHPFIEDRSVRMIGVEAAGDGVHTGRHAATITEGRIGVLHGAMSLLLQDSNGQVQEAHSISAGLDYPGVGPEHSYLKEIGRAEYAAVTDQEALSALQLLSEKEGIIPALETAHALAFLEKLCPTLSSGKEIVINCSGRGDKDVNTVAEKLKTKN</sequence>
<evidence type="ECO:0000255" key="1">
    <source>
        <dbReference type="HAMAP-Rule" id="MF_00133"/>
    </source>
</evidence>
<organism>
    <name type="scientific">Prochlorococcus marinus (strain SARG / CCMP1375 / SS120)</name>
    <dbReference type="NCBI Taxonomy" id="167539"/>
    <lineage>
        <taxon>Bacteria</taxon>
        <taxon>Bacillati</taxon>
        <taxon>Cyanobacteriota</taxon>
        <taxon>Cyanophyceae</taxon>
        <taxon>Synechococcales</taxon>
        <taxon>Prochlorococcaceae</taxon>
        <taxon>Prochlorococcus</taxon>
    </lineage>
</organism>
<protein>
    <recommendedName>
        <fullName evidence="1">Tryptophan synthase beta chain</fullName>
        <ecNumber evidence="1">4.2.1.20</ecNumber>
    </recommendedName>
</protein>